<reference key="1">
    <citation type="journal article" date="2004" name="Genome Res.">
        <title>The status, quality, and expansion of the NIH full-length cDNA project: the Mammalian Gene Collection (MGC).</title>
        <authorList>
            <consortium name="The MGC Project Team"/>
        </authorList>
    </citation>
    <scope>NUCLEOTIDE SEQUENCE [LARGE SCALE MRNA]</scope>
    <source>
        <tissue>Testis</tissue>
    </source>
</reference>
<name>DNAI2_RAT</name>
<comment type="function">
    <text evidence="1">Part of the dynein complex of respiratory cilia.</text>
</comment>
<comment type="subunit">
    <text evidence="2 4 6">Consists of at least two heavy chains and a number of intermediate and light chains (Probable). Interacts with DNAAF2 (By similarity). Interacts with DNAAF6/PIH1D3 (By similarity). Interacts with HEATR2; probably involved in outer arm dynein assembly (By similarity). Interacts with CFAP53 (By similarity).</text>
</comment>
<comment type="subcellular location">
    <subcellularLocation>
        <location evidence="4">Cytoplasm</location>
        <location evidence="4">Cytoskeleton</location>
        <location evidence="4">Cilium axoneme</location>
    </subcellularLocation>
    <subcellularLocation>
        <location evidence="3">Dynein axonemal particle</location>
    </subcellularLocation>
    <text evidence="4">Located in the proximal region of respiratory cilia.</text>
</comment>
<comment type="similarity">
    <text evidence="6">Belongs to the dynein intermediate chain family.</text>
</comment>
<keyword id="KW-0966">Cell projection</keyword>
<keyword id="KW-0969">Cilium</keyword>
<keyword id="KW-0970">Cilium biogenesis/degradation</keyword>
<keyword id="KW-0963">Cytoplasm</keyword>
<keyword id="KW-0206">Cytoskeleton</keyword>
<keyword id="KW-0243">Dynein</keyword>
<keyword id="KW-0493">Microtubule</keyword>
<keyword id="KW-0505">Motor protein</keyword>
<keyword id="KW-1185">Reference proteome</keyword>
<keyword id="KW-0677">Repeat</keyword>
<keyword id="KW-0853">WD repeat</keyword>
<dbReference type="EMBL" id="BC081920">
    <property type="protein sequence ID" value="AAH81920.1"/>
    <property type="molecule type" value="mRNA"/>
</dbReference>
<dbReference type="RefSeq" id="NP_001007727.1">
    <property type="nucleotide sequence ID" value="NM_001007726.1"/>
</dbReference>
<dbReference type="SMR" id="Q66HC9"/>
<dbReference type="FunCoup" id="Q66HC9">
    <property type="interactions" value="75"/>
</dbReference>
<dbReference type="STRING" id="10116.ENSRNOP00000033498"/>
<dbReference type="iPTMnet" id="Q66HC9"/>
<dbReference type="PhosphoSitePlus" id="Q66HC9"/>
<dbReference type="PaxDb" id="10116-ENSRNOP00000033498"/>
<dbReference type="Ensembl" id="ENSRNOT00000038852.5">
    <property type="protein sequence ID" value="ENSRNOP00000033498.3"/>
    <property type="gene ID" value="ENSRNOG00000024523.7"/>
</dbReference>
<dbReference type="GeneID" id="360654"/>
<dbReference type="KEGG" id="rno:360654"/>
<dbReference type="AGR" id="RGD:1359602"/>
<dbReference type="CTD" id="64446"/>
<dbReference type="RGD" id="1359602">
    <property type="gene designation" value="Dnai2"/>
</dbReference>
<dbReference type="eggNOG" id="KOG1587">
    <property type="taxonomic scope" value="Eukaryota"/>
</dbReference>
<dbReference type="GeneTree" id="ENSGT00940000161939"/>
<dbReference type="HOGENOM" id="CLU_022406_1_0_1"/>
<dbReference type="InParanoid" id="Q66HC9"/>
<dbReference type="OMA" id="WDFFYRQ"/>
<dbReference type="OrthoDB" id="366230at2759"/>
<dbReference type="PRO" id="PR:Q66HC9"/>
<dbReference type="Proteomes" id="UP000002494">
    <property type="component" value="Chromosome 10"/>
</dbReference>
<dbReference type="Bgee" id="ENSRNOG00000024523">
    <property type="expression patterns" value="Expressed in testis and 3 other cell types or tissues"/>
</dbReference>
<dbReference type="GO" id="GO:0097729">
    <property type="term" value="C:9+2 motile cilium"/>
    <property type="evidence" value="ECO:0000266"/>
    <property type="project" value="RGD"/>
</dbReference>
<dbReference type="GO" id="GO:0005858">
    <property type="term" value="C:axonemal dynein complex"/>
    <property type="evidence" value="ECO:0000266"/>
    <property type="project" value="RGD"/>
</dbReference>
<dbReference type="GO" id="GO:0005930">
    <property type="term" value="C:axoneme"/>
    <property type="evidence" value="ECO:0000266"/>
    <property type="project" value="RGD"/>
</dbReference>
<dbReference type="GO" id="GO:0005929">
    <property type="term" value="C:cilium"/>
    <property type="evidence" value="ECO:0000266"/>
    <property type="project" value="RGD"/>
</dbReference>
<dbReference type="GO" id="GO:0005737">
    <property type="term" value="C:cytoplasm"/>
    <property type="evidence" value="ECO:0000266"/>
    <property type="project" value="RGD"/>
</dbReference>
<dbReference type="GO" id="GO:0120293">
    <property type="term" value="C:dynein axonemal particle"/>
    <property type="evidence" value="ECO:0000250"/>
    <property type="project" value="UniProtKB"/>
</dbReference>
<dbReference type="GO" id="GO:0009897">
    <property type="term" value="C:external side of plasma membrane"/>
    <property type="evidence" value="ECO:0000266"/>
    <property type="project" value="RGD"/>
</dbReference>
<dbReference type="GO" id="GO:0097386">
    <property type="term" value="C:glial cell projection"/>
    <property type="evidence" value="ECO:0000266"/>
    <property type="project" value="RGD"/>
</dbReference>
<dbReference type="GO" id="GO:0005874">
    <property type="term" value="C:microtubule"/>
    <property type="evidence" value="ECO:0007669"/>
    <property type="project" value="UniProtKB-KW"/>
</dbReference>
<dbReference type="GO" id="GO:0036157">
    <property type="term" value="C:outer dynein arm"/>
    <property type="evidence" value="ECO:0000266"/>
    <property type="project" value="RGD"/>
</dbReference>
<dbReference type="GO" id="GO:0036126">
    <property type="term" value="C:sperm flagellum"/>
    <property type="evidence" value="ECO:0000266"/>
    <property type="project" value="RGD"/>
</dbReference>
<dbReference type="GO" id="GO:0045504">
    <property type="term" value="F:dynein heavy chain binding"/>
    <property type="evidence" value="ECO:0000318"/>
    <property type="project" value="GO_Central"/>
</dbReference>
<dbReference type="GO" id="GO:0045503">
    <property type="term" value="F:dynein light chain binding"/>
    <property type="evidence" value="ECO:0000318"/>
    <property type="project" value="GO_Central"/>
</dbReference>
<dbReference type="GO" id="GO:0003777">
    <property type="term" value="F:microtubule motor activity"/>
    <property type="evidence" value="ECO:0000266"/>
    <property type="project" value="RGD"/>
</dbReference>
<dbReference type="GO" id="GO:0060271">
    <property type="term" value="P:cilium assembly"/>
    <property type="evidence" value="ECO:0000266"/>
    <property type="project" value="RGD"/>
</dbReference>
<dbReference type="GO" id="GO:0003341">
    <property type="term" value="P:cilium movement"/>
    <property type="evidence" value="ECO:0000266"/>
    <property type="project" value="RGD"/>
</dbReference>
<dbReference type="GO" id="GO:0007368">
    <property type="term" value="P:determination of left/right symmetry"/>
    <property type="evidence" value="ECO:0000266"/>
    <property type="project" value="RGD"/>
</dbReference>
<dbReference type="GO" id="GO:0036158">
    <property type="term" value="P:outer dynein arm assembly"/>
    <property type="evidence" value="ECO:0000266"/>
    <property type="project" value="RGD"/>
</dbReference>
<dbReference type="FunFam" id="2.130.10.10:FF:000380">
    <property type="entry name" value="Dynein intermediate chain 2, axonemal"/>
    <property type="match status" value="1"/>
</dbReference>
<dbReference type="FunFam" id="2.130.10.10:FF:000371">
    <property type="entry name" value="dynein intermediate chain 2, axonemal"/>
    <property type="match status" value="1"/>
</dbReference>
<dbReference type="Gene3D" id="2.130.10.10">
    <property type="entry name" value="YVTN repeat-like/Quinoprotein amine dehydrogenase"/>
    <property type="match status" value="2"/>
</dbReference>
<dbReference type="InterPro" id="IPR050687">
    <property type="entry name" value="Dynein_IC"/>
</dbReference>
<dbReference type="InterPro" id="IPR015943">
    <property type="entry name" value="WD40/YVTN_repeat-like_dom_sf"/>
</dbReference>
<dbReference type="InterPro" id="IPR036322">
    <property type="entry name" value="WD40_repeat_dom_sf"/>
</dbReference>
<dbReference type="InterPro" id="IPR001680">
    <property type="entry name" value="WD40_rpt"/>
</dbReference>
<dbReference type="PANTHER" id="PTHR12442:SF7">
    <property type="entry name" value="DYNEIN AXONEMAL INTERMEDIATE CHAIN 2"/>
    <property type="match status" value="1"/>
</dbReference>
<dbReference type="PANTHER" id="PTHR12442">
    <property type="entry name" value="DYNEIN INTERMEDIATE CHAIN"/>
    <property type="match status" value="1"/>
</dbReference>
<dbReference type="SMART" id="SM00320">
    <property type="entry name" value="WD40"/>
    <property type="match status" value="5"/>
</dbReference>
<dbReference type="SUPFAM" id="SSF50978">
    <property type="entry name" value="WD40 repeat-like"/>
    <property type="match status" value="1"/>
</dbReference>
<dbReference type="PROSITE" id="PS50294">
    <property type="entry name" value="WD_REPEATS_REGION"/>
    <property type="match status" value="2"/>
</dbReference>
<accession>Q66HC9</accession>
<sequence length="619" mass="70318">MEIVYVYVKKRSEFGKQCNFSDRQAELNIDISPNPELAALYVERNPVDTGIQCSASMSEHEANTERFEMENCGVNHVEGGWPKDVNPQELEQTIRFRKKVEKDENYINAVMQLGSIMEHCIKQNNAIDIYEEYFDDEEAVEVTEEAPSAKTINVFRDPQEIKRTATHLSWHPDGNKKLAVAYSCLQFQRSPMGMSHDSYIWDLENPNRPEIALKPSSPLITLEYNPKDSHVLLGGCYNGQIACWDTRKGSLVAELSTIEFSHRDPVYGTIWLQSKTGTECFSASTDGQVMWWDIRKISEPTEVVIMDITRKEQLENALGAISLEFESTLPTKFMVGTEQGIVISCNRKAKTPAEKIVCTFSGHHGPIYALQRNPFYPKNFLTVGDWAARIWSEESRESSIMWTRYHMAYLSDGAWSPVRPAVFFTTKMDGTLDIWDLVFKQCDPALSLKVCDDPLFCLRVQDTGCLIACGSELGTTTLLEVSSSLSTLQRNERNIASSIFERETRREKILEARHREMRLKEKGKAEGRDDDQKEEETALDLDELVNKAEEEFFEVIFAELKRKEAEALKKKPKPKKASIEVEGEDELEDIAGEEEESGIIMGEDTGEDDMDEKNEGGAP</sequence>
<organism>
    <name type="scientific">Rattus norvegicus</name>
    <name type="common">Rat</name>
    <dbReference type="NCBI Taxonomy" id="10116"/>
    <lineage>
        <taxon>Eukaryota</taxon>
        <taxon>Metazoa</taxon>
        <taxon>Chordata</taxon>
        <taxon>Craniata</taxon>
        <taxon>Vertebrata</taxon>
        <taxon>Euteleostomi</taxon>
        <taxon>Mammalia</taxon>
        <taxon>Eutheria</taxon>
        <taxon>Euarchontoglires</taxon>
        <taxon>Glires</taxon>
        <taxon>Rodentia</taxon>
        <taxon>Myomorpha</taxon>
        <taxon>Muroidea</taxon>
        <taxon>Muridae</taxon>
        <taxon>Murinae</taxon>
        <taxon>Rattus</taxon>
    </lineage>
</organism>
<evidence type="ECO:0000250" key="1"/>
<evidence type="ECO:0000250" key="2">
    <source>
        <dbReference type="UniProtKB" id="A2AC93"/>
    </source>
</evidence>
<evidence type="ECO:0000250" key="3">
    <source>
        <dbReference type="UniProtKB" id="Q4QR00"/>
    </source>
</evidence>
<evidence type="ECO:0000250" key="4">
    <source>
        <dbReference type="UniProtKB" id="Q9GZS0"/>
    </source>
</evidence>
<evidence type="ECO:0000256" key="5">
    <source>
        <dbReference type="SAM" id="MobiDB-lite"/>
    </source>
</evidence>
<evidence type="ECO:0000305" key="6"/>
<protein>
    <recommendedName>
        <fullName>Dynein axonemal intermediate chain 2</fullName>
    </recommendedName>
    <alternativeName>
        <fullName>Axonemal dynein intermediate chain 2</fullName>
    </alternativeName>
</protein>
<proteinExistence type="evidence at transcript level"/>
<feature type="chain" id="PRO_0000365817" description="Dynein axonemal intermediate chain 2">
    <location>
        <begin position="1"/>
        <end position="619"/>
    </location>
</feature>
<feature type="repeat" description="WD 1">
    <location>
        <begin position="214"/>
        <end position="254"/>
    </location>
</feature>
<feature type="repeat" description="WD 2">
    <location>
        <begin position="261"/>
        <end position="302"/>
    </location>
</feature>
<feature type="repeat" description="WD 3">
    <location>
        <begin position="362"/>
        <end position="401"/>
    </location>
</feature>
<feature type="repeat" description="WD 4">
    <location>
        <begin position="405"/>
        <end position="445"/>
    </location>
</feature>
<feature type="repeat" description="WD 5">
    <location>
        <begin position="450"/>
        <end position="489"/>
    </location>
</feature>
<feature type="region of interest" description="Disordered" evidence="5">
    <location>
        <begin position="566"/>
        <end position="619"/>
    </location>
</feature>
<feature type="compositionally biased region" description="Acidic residues" evidence="5">
    <location>
        <begin position="581"/>
        <end position="597"/>
    </location>
</feature>
<gene>
    <name type="primary">Dnai2</name>
    <name type="synonym">Dnaic2</name>
</gene>